<protein>
    <recommendedName>
        <fullName>Histone-lysine N-methyltransferase, H3 lysine-36 specific</fullName>
        <ecNumber evidence="2">2.1.1.359</ecNumber>
    </recommendedName>
    <alternativeName>
        <fullName>SET domain-containing protein 2</fullName>
    </alternativeName>
</protein>
<keyword id="KW-0158">Chromosome</keyword>
<keyword id="KW-0489">Methyltransferase</keyword>
<keyword id="KW-0539">Nucleus</keyword>
<keyword id="KW-1185">Reference proteome</keyword>
<keyword id="KW-0678">Repressor</keyword>
<keyword id="KW-0949">S-adenosyl-L-methionine</keyword>
<keyword id="KW-0804">Transcription</keyword>
<keyword id="KW-0805">Transcription regulation</keyword>
<keyword id="KW-0808">Transferase</keyword>
<proteinExistence type="inferred from homology"/>
<name>SET2_EMENI</name>
<organism>
    <name type="scientific">Emericella nidulans (strain FGSC A4 / ATCC 38163 / CBS 112.46 / NRRL 194 / M139)</name>
    <name type="common">Aspergillus nidulans</name>
    <dbReference type="NCBI Taxonomy" id="227321"/>
    <lineage>
        <taxon>Eukaryota</taxon>
        <taxon>Fungi</taxon>
        <taxon>Dikarya</taxon>
        <taxon>Ascomycota</taxon>
        <taxon>Pezizomycotina</taxon>
        <taxon>Eurotiomycetes</taxon>
        <taxon>Eurotiomycetidae</taxon>
        <taxon>Eurotiales</taxon>
        <taxon>Aspergillaceae</taxon>
        <taxon>Aspergillus</taxon>
        <taxon>Aspergillus subgen. Nidulantes</taxon>
    </lineage>
</organism>
<dbReference type="EC" id="2.1.1.359" evidence="2"/>
<dbReference type="EMBL" id="AACD01000162">
    <property type="protein sequence ID" value="EAA60113.1"/>
    <property type="molecule type" value="Genomic_DNA"/>
</dbReference>
<dbReference type="EMBL" id="BN001303">
    <property type="protein sequence ID" value="CBF77940.1"/>
    <property type="molecule type" value="Genomic_DNA"/>
</dbReference>
<dbReference type="RefSeq" id="XP_682094.1">
    <property type="nucleotide sequence ID" value="XM_677002.1"/>
</dbReference>
<dbReference type="SMR" id="Q5ASA5"/>
<dbReference type="FunCoup" id="Q5ASA5">
    <property type="interactions" value="100"/>
</dbReference>
<dbReference type="STRING" id="227321.Q5ASA5"/>
<dbReference type="EnsemblFungi" id="CBF77940">
    <property type="protein sequence ID" value="CBF77940"/>
    <property type="gene ID" value="ANIA_08825"/>
</dbReference>
<dbReference type="KEGG" id="ani:ANIA_08825"/>
<dbReference type="eggNOG" id="KOG4442">
    <property type="taxonomic scope" value="Eukaryota"/>
</dbReference>
<dbReference type="HOGENOM" id="CLU_008492_0_1_1"/>
<dbReference type="InParanoid" id="Q5ASA5"/>
<dbReference type="OMA" id="AQSQPCY"/>
<dbReference type="OrthoDB" id="422362at2759"/>
<dbReference type="Proteomes" id="UP000000560">
    <property type="component" value="Chromosome III"/>
</dbReference>
<dbReference type="GO" id="GO:0000785">
    <property type="term" value="C:chromatin"/>
    <property type="evidence" value="ECO:0000318"/>
    <property type="project" value="GO_Central"/>
</dbReference>
<dbReference type="GO" id="GO:0005634">
    <property type="term" value="C:nucleus"/>
    <property type="evidence" value="ECO:0000318"/>
    <property type="project" value="GO_Central"/>
</dbReference>
<dbReference type="GO" id="GO:0046975">
    <property type="term" value="F:histone H3K36 methyltransferase activity"/>
    <property type="evidence" value="ECO:0000318"/>
    <property type="project" value="GO_Central"/>
</dbReference>
<dbReference type="GO" id="GO:0140955">
    <property type="term" value="F:histone H3K36 trimethyltransferase activity"/>
    <property type="evidence" value="ECO:0007669"/>
    <property type="project" value="UniProtKB-EC"/>
</dbReference>
<dbReference type="GO" id="GO:0032259">
    <property type="term" value="P:methylation"/>
    <property type="evidence" value="ECO:0007669"/>
    <property type="project" value="UniProtKB-KW"/>
</dbReference>
<dbReference type="GO" id="GO:0006355">
    <property type="term" value="P:regulation of DNA-templated transcription"/>
    <property type="evidence" value="ECO:0000318"/>
    <property type="project" value="GO_Central"/>
</dbReference>
<dbReference type="CDD" id="cd19172">
    <property type="entry name" value="SET_SETD2"/>
    <property type="match status" value="1"/>
</dbReference>
<dbReference type="FunFam" id="1.10.1740.100:FF:000002">
    <property type="entry name" value="Histone-lysine N-methyltransferase"/>
    <property type="match status" value="1"/>
</dbReference>
<dbReference type="FunFam" id="2.170.270.10:FF:000033">
    <property type="entry name" value="Histone-lysine N-methyltransferase"/>
    <property type="match status" value="1"/>
</dbReference>
<dbReference type="Gene3D" id="2.20.70.10">
    <property type="match status" value="1"/>
</dbReference>
<dbReference type="Gene3D" id="2.170.270.10">
    <property type="entry name" value="SET domain"/>
    <property type="match status" value="1"/>
</dbReference>
<dbReference type="Gene3D" id="1.10.1740.100">
    <property type="entry name" value="Set2, Rpb1 interacting domain"/>
    <property type="match status" value="1"/>
</dbReference>
<dbReference type="InterPro" id="IPR006560">
    <property type="entry name" value="AWS_dom"/>
</dbReference>
<dbReference type="InterPro" id="IPR003616">
    <property type="entry name" value="Post-SET_dom"/>
</dbReference>
<dbReference type="InterPro" id="IPR025788">
    <property type="entry name" value="Set2_fungi"/>
</dbReference>
<dbReference type="InterPro" id="IPR050777">
    <property type="entry name" value="SET2_Histone-Lys_MeTrsfase"/>
</dbReference>
<dbReference type="InterPro" id="IPR001214">
    <property type="entry name" value="SET_dom"/>
</dbReference>
<dbReference type="InterPro" id="IPR046341">
    <property type="entry name" value="SET_dom_sf"/>
</dbReference>
<dbReference type="InterPro" id="IPR044437">
    <property type="entry name" value="SETD2/Set2_SET"/>
</dbReference>
<dbReference type="InterPro" id="IPR013257">
    <property type="entry name" value="SRI"/>
</dbReference>
<dbReference type="InterPro" id="IPR038190">
    <property type="entry name" value="SRI_sf"/>
</dbReference>
<dbReference type="InterPro" id="IPR017923">
    <property type="entry name" value="TFIIS_N"/>
</dbReference>
<dbReference type="InterPro" id="IPR001202">
    <property type="entry name" value="WW_dom"/>
</dbReference>
<dbReference type="InterPro" id="IPR036020">
    <property type="entry name" value="WW_dom_sf"/>
</dbReference>
<dbReference type="PANTHER" id="PTHR22884">
    <property type="entry name" value="SET DOMAIN PROTEINS"/>
    <property type="match status" value="1"/>
</dbReference>
<dbReference type="Pfam" id="PF17907">
    <property type="entry name" value="AWS"/>
    <property type="match status" value="1"/>
</dbReference>
<dbReference type="Pfam" id="PF08711">
    <property type="entry name" value="Med26"/>
    <property type="match status" value="1"/>
</dbReference>
<dbReference type="Pfam" id="PF00856">
    <property type="entry name" value="SET"/>
    <property type="match status" value="1"/>
</dbReference>
<dbReference type="Pfam" id="PF08236">
    <property type="entry name" value="SRI"/>
    <property type="match status" value="1"/>
</dbReference>
<dbReference type="SMART" id="SM00570">
    <property type="entry name" value="AWS"/>
    <property type="match status" value="1"/>
</dbReference>
<dbReference type="SMART" id="SM00508">
    <property type="entry name" value="PostSET"/>
    <property type="match status" value="1"/>
</dbReference>
<dbReference type="SMART" id="SM00317">
    <property type="entry name" value="SET"/>
    <property type="match status" value="1"/>
</dbReference>
<dbReference type="SUPFAM" id="SSF82199">
    <property type="entry name" value="SET domain"/>
    <property type="match status" value="1"/>
</dbReference>
<dbReference type="SUPFAM" id="SSF51045">
    <property type="entry name" value="WW domain"/>
    <property type="match status" value="1"/>
</dbReference>
<dbReference type="PROSITE" id="PS51215">
    <property type="entry name" value="AWS"/>
    <property type="match status" value="1"/>
</dbReference>
<dbReference type="PROSITE" id="PS50868">
    <property type="entry name" value="POST_SET"/>
    <property type="match status" value="1"/>
</dbReference>
<dbReference type="PROSITE" id="PS51568">
    <property type="entry name" value="SAM_MT43_SET2_1"/>
    <property type="match status" value="1"/>
</dbReference>
<dbReference type="PROSITE" id="PS50280">
    <property type="entry name" value="SET"/>
    <property type="match status" value="1"/>
</dbReference>
<dbReference type="PROSITE" id="PS01159">
    <property type="entry name" value="WW_DOMAIN_1"/>
    <property type="match status" value="1"/>
</dbReference>
<dbReference type="PROSITE" id="PS50020">
    <property type="entry name" value="WW_DOMAIN_2"/>
    <property type="match status" value="1"/>
</dbReference>
<accession>Q5ASA5</accession>
<accession>C8V9K8</accession>
<evidence type="ECO:0000250" key="1"/>
<evidence type="ECO:0000250" key="2">
    <source>
        <dbReference type="UniProtKB" id="P46995"/>
    </source>
</evidence>
<evidence type="ECO:0000255" key="3">
    <source>
        <dbReference type="PROSITE-ProRule" id="PRU00155"/>
    </source>
</evidence>
<evidence type="ECO:0000255" key="4">
    <source>
        <dbReference type="PROSITE-ProRule" id="PRU00190"/>
    </source>
</evidence>
<evidence type="ECO:0000255" key="5">
    <source>
        <dbReference type="PROSITE-ProRule" id="PRU00224"/>
    </source>
</evidence>
<evidence type="ECO:0000255" key="6">
    <source>
        <dbReference type="PROSITE-ProRule" id="PRU00562"/>
    </source>
</evidence>
<evidence type="ECO:0000255" key="7">
    <source>
        <dbReference type="PROSITE-ProRule" id="PRU00901"/>
    </source>
</evidence>
<evidence type="ECO:0000256" key="8">
    <source>
        <dbReference type="SAM" id="MobiDB-lite"/>
    </source>
</evidence>
<comment type="function">
    <text evidence="2">Histone methyltransferase that trimethylates histone H3 'Lys-36' forming H3K36me3. Involved in transcription elongation as well as in transcription repression.</text>
</comment>
<comment type="catalytic activity">
    <reaction evidence="2 7">
        <text>L-lysyl(36)-[histone H3] + 3 S-adenosyl-L-methionine = N(6),N(6),N(6)-trimethyl-L-lysyl(36)-[histone H3] + 3 S-adenosyl-L-homocysteine + 3 H(+)</text>
        <dbReference type="Rhea" id="RHEA:60324"/>
        <dbReference type="Rhea" id="RHEA-COMP:9785"/>
        <dbReference type="Rhea" id="RHEA-COMP:15536"/>
        <dbReference type="ChEBI" id="CHEBI:15378"/>
        <dbReference type="ChEBI" id="CHEBI:29969"/>
        <dbReference type="ChEBI" id="CHEBI:57856"/>
        <dbReference type="ChEBI" id="CHEBI:59789"/>
        <dbReference type="ChEBI" id="CHEBI:61961"/>
        <dbReference type="EC" id="2.1.1.359"/>
    </reaction>
</comment>
<comment type="subcellular location">
    <subcellularLocation>
        <location evidence="1">Nucleus</location>
    </subcellularLocation>
    <subcellularLocation>
        <location evidence="1">Chromosome</location>
    </subcellularLocation>
</comment>
<comment type="domain">
    <text evidence="1">The AWS and SET domains are necessary for transcription repression.</text>
</comment>
<comment type="similarity">
    <text evidence="7">Belongs to the class V-like SAM-binding methyltransferase superfamily. Histone-lysine methyltransferase family. SET2 subfamily.</text>
</comment>
<feature type="chain" id="PRO_0000269788" description="Histone-lysine N-methyltransferase, H3 lysine-36 specific">
    <location>
        <begin position="1"/>
        <end position="980"/>
    </location>
</feature>
<feature type="domain" description="AWS" evidence="6">
    <location>
        <begin position="167"/>
        <end position="239"/>
    </location>
</feature>
<feature type="domain" description="SET" evidence="4">
    <location>
        <begin position="241"/>
        <end position="358"/>
    </location>
</feature>
<feature type="domain" description="Post-SET" evidence="3">
    <location>
        <begin position="365"/>
        <end position="381"/>
    </location>
</feature>
<feature type="domain" description="WW" evidence="5">
    <location>
        <begin position="630"/>
        <end position="661"/>
    </location>
</feature>
<feature type="region of interest" description="Disordered" evidence="8">
    <location>
        <begin position="21"/>
        <end position="133"/>
    </location>
</feature>
<feature type="region of interest" description="Disordered" evidence="8">
    <location>
        <begin position="562"/>
        <end position="636"/>
    </location>
</feature>
<feature type="region of interest" description="Disordered" evidence="8">
    <location>
        <begin position="652"/>
        <end position="675"/>
    </location>
</feature>
<feature type="region of interest" description="Disordered" evidence="8">
    <location>
        <begin position="689"/>
        <end position="724"/>
    </location>
</feature>
<feature type="region of interest" description="Disordered" evidence="8">
    <location>
        <begin position="767"/>
        <end position="787"/>
    </location>
</feature>
<feature type="region of interest" description="Disordered" evidence="8">
    <location>
        <begin position="803"/>
        <end position="980"/>
    </location>
</feature>
<feature type="compositionally biased region" description="Low complexity" evidence="8">
    <location>
        <begin position="61"/>
        <end position="78"/>
    </location>
</feature>
<feature type="compositionally biased region" description="Basic and acidic residues" evidence="8">
    <location>
        <begin position="80"/>
        <end position="97"/>
    </location>
</feature>
<feature type="compositionally biased region" description="Basic and acidic residues" evidence="8">
    <location>
        <begin position="576"/>
        <end position="587"/>
    </location>
</feature>
<feature type="compositionally biased region" description="Basic residues" evidence="8">
    <location>
        <begin position="616"/>
        <end position="626"/>
    </location>
</feature>
<feature type="compositionally biased region" description="Pro residues" evidence="8">
    <location>
        <begin position="661"/>
        <end position="670"/>
    </location>
</feature>
<feature type="compositionally biased region" description="Basic and acidic residues" evidence="8">
    <location>
        <begin position="710"/>
        <end position="724"/>
    </location>
</feature>
<feature type="compositionally biased region" description="Basic and acidic residues" evidence="8">
    <location>
        <begin position="772"/>
        <end position="787"/>
    </location>
</feature>
<feature type="compositionally biased region" description="Basic and acidic residues" evidence="8">
    <location>
        <begin position="811"/>
        <end position="822"/>
    </location>
</feature>
<feature type="compositionally biased region" description="Low complexity" evidence="8">
    <location>
        <begin position="870"/>
        <end position="882"/>
    </location>
</feature>
<feature type="compositionally biased region" description="Pro residues" evidence="8">
    <location>
        <begin position="932"/>
        <end position="943"/>
    </location>
</feature>
<reference key="1">
    <citation type="journal article" date="2005" name="Nature">
        <title>Sequencing of Aspergillus nidulans and comparative analysis with A. fumigatus and A. oryzae.</title>
        <authorList>
            <person name="Galagan J.E."/>
            <person name="Calvo S.E."/>
            <person name="Cuomo C."/>
            <person name="Ma L.-J."/>
            <person name="Wortman J.R."/>
            <person name="Batzoglou S."/>
            <person name="Lee S.-I."/>
            <person name="Bastuerkmen M."/>
            <person name="Spevak C.C."/>
            <person name="Clutterbuck J."/>
            <person name="Kapitonov V."/>
            <person name="Jurka J."/>
            <person name="Scazzocchio C."/>
            <person name="Farman M.L."/>
            <person name="Butler J."/>
            <person name="Purcell S."/>
            <person name="Harris S."/>
            <person name="Braus G.H."/>
            <person name="Draht O."/>
            <person name="Busch S."/>
            <person name="D'Enfert C."/>
            <person name="Bouchier C."/>
            <person name="Goldman G.H."/>
            <person name="Bell-Pedersen D."/>
            <person name="Griffiths-Jones S."/>
            <person name="Doonan J.H."/>
            <person name="Yu J."/>
            <person name="Vienken K."/>
            <person name="Pain A."/>
            <person name="Freitag M."/>
            <person name="Selker E.U."/>
            <person name="Archer D.B."/>
            <person name="Penalva M.A."/>
            <person name="Oakley B.R."/>
            <person name="Momany M."/>
            <person name="Tanaka T."/>
            <person name="Kumagai T."/>
            <person name="Asai K."/>
            <person name="Machida M."/>
            <person name="Nierman W.C."/>
            <person name="Denning D.W."/>
            <person name="Caddick M.X."/>
            <person name="Hynes M."/>
            <person name="Paoletti M."/>
            <person name="Fischer R."/>
            <person name="Miller B.L."/>
            <person name="Dyer P.S."/>
            <person name="Sachs M.S."/>
            <person name="Osmani S.A."/>
            <person name="Birren B.W."/>
        </authorList>
    </citation>
    <scope>NUCLEOTIDE SEQUENCE [LARGE SCALE GENOMIC DNA]</scope>
    <source>
        <strain>FGSC A4 / ATCC 38163 / CBS 112.46 / NRRL 194 / M139</strain>
    </source>
</reference>
<reference key="2">
    <citation type="journal article" date="2009" name="Fungal Genet. Biol.">
        <title>The 2008 update of the Aspergillus nidulans genome annotation: a community effort.</title>
        <authorList>
            <person name="Wortman J.R."/>
            <person name="Gilsenan J.M."/>
            <person name="Joardar V."/>
            <person name="Deegan J."/>
            <person name="Clutterbuck J."/>
            <person name="Andersen M.R."/>
            <person name="Archer D."/>
            <person name="Bencina M."/>
            <person name="Braus G."/>
            <person name="Coutinho P."/>
            <person name="von Dohren H."/>
            <person name="Doonan J."/>
            <person name="Driessen A.J."/>
            <person name="Durek P."/>
            <person name="Espeso E."/>
            <person name="Fekete E."/>
            <person name="Flipphi M."/>
            <person name="Estrada C.G."/>
            <person name="Geysens S."/>
            <person name="Goldman G."/>
            <person name="de Groot P.W."/>
            <person name="Hansen K."/>
            <person name="Harris S.D."/>
            <person name="Heinekamp T."/>
            <person name="Helmstaedt K."/>
            <person name="Henrissat B."/>
            <person name="Hofmann G."/>
            <person name="Homan T."/>
            <person name="Horio T."/>
            <person name="Horiuchi H."/>
            <person name="James S."/>
            <person name="Jones M."/>
            <person name="Karaffa L."/>
            <person name="Karanyi Z."/>
            <person name="Kato M."/>
            <person name="Keller N."/>
            <person name="Kelly D.E."/>
            <person name="Kiel J.A."/>
            <person name="Kim J.M."/>
            <person name="van der Klei I.J."/>
            <person name="Klis F.M."/>
            <person name="Kovalchuk A."/>
            <person name="Krasevec N."/>
            <person name="Kubicek C.P."/>
            <person name="Liu B."/>
            <person name="Maccabe A."/>
            <person name="Meyer V."/>
            <person name="Mirabito P."/>
            <person name="Miskei M."/>
            <person name="Mos M."/>
            <person name="Mullins J."/>
            <person name="Nelson D.R."/>
            <person name="Nielsen J."/>
            <person name="Oakley B.R."/>
            <person name="Osmani S.A."/>
            <person name="Pakula T."/>
            <person name="Paszewski A."/>
            <person name="Paulsen I."/>
            <person name="Pilsyk S."/>
            <person name="Pocsi I."/>
            <person name="Punt P.J."/>
            <person name="Ram A.F."/>
            <person name="Ren Q."/>
            <person name="Robellet X."/>
            <person name="Robson G."/>
            <person name="Seiboth B."/>
            <person name="van Solingen P."/>
            <person name="Specht T."/>
            <person name="Sun J."/>
            <person name="Taheri-Talesh N."/>
            <person name="Takeshita N."/>
            <person name="Ussery D."/>
            <person name="vanKuyk P.A."/>
            <person name="Visser H."/>
            <person name="van de Vondervoort P.J."/>
            <person name="de Vries R.P."/>
            <person name="Walton J."/>
            <person name="Xiang X."/>
            <person name="Xiong Y."/>
            <person name="Zeng A.P."/>
            <person name="Brandt B.W."/>
            <person name="Cornell M.J."/>
            <person name="van den Hondel C.A."/>
            <person name="Visser J."/>
            <person name="Oliver S.G."/>
            <person name="Turner G."/>
        </authorList>
    </citation>
    <scope>GENOME REANNOTATION</scope>
    <source>
        <strain>FGSC A4 / ATCC 38163 / CBS 112.46 / NRRL 194 / M139</strain>
    </source>
</reference>
<sequence length="980" mass="109885">MSTHDNADRQSEFVADAVTAMKLEQSENNTDAPILNGGGAAMKPDSKAASPEPLIKDERASSTFMKSRSSSRTPSSRTPLKKEHSDSEDIQEKRGDDASGTEKVGGGISVKMEPGQPPKLARSSSQKVVPRPPQLFLDLPDSTEEAQKTFEVIETCQYANKYMGYTEHAMECDCAEEWVLVVVLAPSPSFRVPSQNPASSTNRACGEDSDCINRATKIECMGDCGCGPDCQNQRFQRREYANVAVIKTEKKGYGLRAEEDLRPHQFIFEYVGEVINEGPFHRRMRQYDAEGIKHFYFMSLSKGEFVDATKKGNLGRFCNHSCNPNCYVDKWVVGEKLRMGIFAERHIQAGEELVFNYNVDRYGADPQPCYCGEPNCTGFIGGKTQTERATKLSNATIEALGIEDADGWDTAVAKRPRKKKMGEEDEEYVDSVQPKSLDESGVTKVMAALMQCKEKWIAVKLLGRIQRCDDERVRNRVVKMHGYQILNSQLAMWKDDFNVVLQILDILDKFPRLTRNKIIDSKIESTIQPLTSCGDERVEQKATVLLQLWSTLEIGYRIPRMKRDPNAATPTVSQFHRRDDISDERQQRPRSRSRSRSIEAPRGPAAQKRGGQGPRNQHHQGPRTFRRRFDPLPQGWFAAESNGRTYYYSARGDTTWTRPTKPAPQPPPPPKESRDKALQSIIDGIMNAKEQTPKEKSGTPTTPQPSKPTPEGKDRQEKWRSYSEEKQKKLYENTLYPHIKYVVDKFKHKLPKDDLKRYAKDVAKKLVNSDFKNNRVTDPTKIDDKQQKKVKKFCKEFFDKAVAKHQAHEKRKAEKLAKEGSSDNKLATPVGGQSEGDGTPDVKMSDDEGSTGREGTGSLKRKRDELSVGNTNTPDDTPTSSTKRQRSSTPPPPPPPAMNTNDNNNDNDDMSVRSDEPDADADADEVVLVGNPTPPPPPPPPPQEDMRIPDADAETNGHNFEGYGEMNRSHQAQIGIEGNV</sequence>
<gene>
    <name type="primary">set2</name>
    <name type="ORF">AN8825</name>
</gene>